<accession>B1WNF0</accession>
<gene>
    <name evidence="1" type="primary">thf1</name>
    <name type="ordered locus">cce_0441</name>
</gene>
<sequence length="242" mass="27907">MDNIRTVSDTKRKFYGYHTRPINSIYRRFVEELLVEMHLLSVNVDFKYDPIYALGVVTSFERFMQGYSPESDKTSIFNALCQAVDGNSEQYHQEAEALINEAKGLSITEFKEKLGQEGGDGILWGTCGAIAQNPKFKYSRLFGVGLYTLLMEIDPDLVKEEDKRNQTIKEVSDALQFSSDKLQKDLDLYRSNLDKMQQLLTVIEDTLEADRKKRASQKLEKKPEVVEEKEHKENEEQQQSSN</sequence>
<evidence type="ECO:0000255" key="1">
    <source>
        <dbReference type="HAMAP-Rule" id="MF_01843"/>
    </source>
</evidence>
<evidence type="ECO:0000256" key="2">
    <source>
        <dbReference type="SAM" id="MobiDB-lite"/>
    </source>
</evidence>
<feature type="chain" id="PRO_1000188423" description="Protein Thf1">
    <location>
        <begin position="1"/>
        <end position="242"/>
    </location>
</feature>
<feature type="region of interest" description="Disordered" evidence="2">
    <location>
        <begin position="212"/>
        <end position="242"/>
    </location>
</feature>
<feature type="coiled-coil region" evidence="1">
    <location>
        <begin position="178"/>
        <end position="209"/>
    </location>
</feature>
<feature type="compositionally biased region" description="Basic and acidic residues" evidence="2">
    <location>
        <begin position="217"/>
        <end position="235"/>
    </location>
</feature>
<protein>
    <recommendedName>
        <fullName evidence="1">Protein Thf1</fullName>
    </recommendedName>
</protein>
<comment type="function">
    <text evidence="1">May be involved in photosynthetic membrane biogenesis.</text>
</comment>
<comment type="similarity">
    <text evidence="1">Belongs to the THF1 family.</text>
</comment>
<keyword id="KW-0175">Coiled coil</keyword>
<keyword id="KW-1185">Reference proteome</keyword>
<reference key="1">
    <citation type="journal article" date="2008" name="Proc. Natl. Acad. Sci. U.S.A.">
        <title>The genome of Cyanothece 51142, a unicellular diazotrophic cyanobacterium important in the marine nitrogen cycle.</title>
        <authorList>
            <person name="Welsh E.A."/>
            <person name="Liberton M."/>
            <person name="Stoeckel J."/>
            <person name="Loh T."/>
            <person name="Elvitigala T."/>
            <person name="Wang C."/>
            <person name="Wollam A."/>
            <person name="Fulton R.S."/>
            <person name="Clifton S.W."/>
            <person name="Jacobs J.M."/>
            <person name="Aurora R."/>
            <person name="Ghosh B.K."/>
            <person name="Sherman L.A."/>
            <person name="Smith R.D."/>
            <person name="Wilson R.K."/>
            <person name="Pakrasi H.B."/>
        </authorList>
    </citation>
    <scope>NUCLEOTIDE SEQUENCE [LARGE SCALE GENOMIC DNA]</scope>
    <source>
        <strain>ATCC 51142 / BH68</strain>
    </source>
</reference>
<organism>
    <name type="scientific">Crocosphaera subtropica (strain ATCC 51142 / BH68)</name>
    <name type="common">Cyanothece sp. (strain ATCC 51142)</name>
    <dbReference type="NCBI Taxonomy" id="43989"/>
    <lineage>
        <taxon>Bacteria</taxon>
        <taxon>Bacillati</taxon>
        <taxon>Cyanobacteriota</taxon>
        <taxon>Cyanophyceae</taxon>
        <taxon>Oscillatoriophycideae</taxon>
        <taxon>Chroococcales</taxon>
        <taxon>Aphanothecaceae</taxon>
        <taxon>Crocosphaera</taxon>
        <taxon>Crocosphaera subtropica</taxon>
    </lineage>
</organism>
<dbReference type="EMBL" id="CP000806">
    <property type="protein sequence ID" value="ACB49792.1"/>
    <property type="molecule type" value="Genomic_DNA"/>
</dbReference>
<dbReference type="RefSeq" id="WP_009546529.1">
    <property type="nucleotide sequence ID" value="NC_010546.1"/>
</dbReference>
<dbReference type="SMR" id="B1WNF0"/>
<dbReference type="STRING" id="43989.cce_0441"/>
<dbReference type="KEGG" id="cyt:cce_0441"/>
<dbReference type="eggNOG" id="ENOG502Z86M">
    <property type="taxonomic scope" value="Bacteria"/>
</dbReference>
<dbReference type="HOGENOM" id="CLU_079763_1_0_3"/>
<dbReference type="OrthoDB" id="463078at2"/>
<dbReference type="Proteomes" id="UP000001203">
    <property type="component" value="Chromosome circular"/>
</dbReference>
<dbReference type="GO" id="GO:0030096">
    <property type="term" value="C:plasma membrane-derived thylakoid photosystem II"/>
    <property type="evidence" value="ECO:0007669"/>
    <property type="project" value="TreeGrafter"/>
</dbReference>
<dbReference type="GO" id="GO:0010207">
    <property type="term" value="P:photosystem II assembly"/>
    <property type="evidence" value="ECO:0007669"/>
    <property type="project" value="InterPro"/>
</dbReference>
<dbReference type="HAMAP" id="MF_01843">
    <property type="entry name" value="Thf1"/>
    <property type="match status" value="1"/>
</dbReference>
<dbReference type="InterPro" id="IPR017499">
    <property type="entry name" value="Thf1"/>
</dbReference>
<dbReference type="NCBIfam" id="TIGR03060">
    <property type="entry name" value="PS_II_psb29"/>
    <property type="match status" value="1"/>
</dbReference>
<dbReference type="PANTHER" id="PTHR34793">
    <property type="entry name" value="PROTEIN THYLAKOID FORMATION 1, CHLOROPLASTIC"/>
    <property type="match status" value="1"/>
</dbReference>
<dbReference type="PANTHER" id="PTHR34793:SF1">
    <property type="entry name" value="PROTEIN THYLAKOID FORMATION 1, CHLOROPLASTIC"/>
    <property type="match status" value="1"/>
</dbReference>
<dbReference type="Pfam" id="PF11264">
    <property type="entry name" value="ThylakoidFormat"/>
    <property type="match status" value="1"/>
</dbReference>
<name>THF1_CROS5</name>
<proteinExistence type="inferred from homology"/>